<evidence type="ECO:0000255" key="1">
    <source>
        <dbReference type="HAMAP-Rule" id="MF_00194"/>
    </source>
</evidence>
<comment type="function">
    <text evidence="1">May be involved in recombination.</text>
</comment>
<comment type="subcellular location">
    <subcellularLocation>
        <location evidence="1">Cytoplasm</location>
        <location evidence="1">Nucleoid</location>
    </subcellularLocation>
</comment>
<comment type="similarity">
    <text evidence="1">Belongs to the RdgC family.</text>
</comment>
<dbReference type="EMBL" id="CP001138">
    <property type="protein sequence ID" value="ACH49069.1"/>
    <property type="molecule type" value="Genomic_DNA"/>
</dbReference>
<dbReference type="RefSeq" id="WP_000964305.1">
    <property type="nucleotide sequence ID" value="NC_011149.1"/>
</dbReference>
<dbReference type="SMR" id="B5EWS4"/>
<dbReference type="KEGG" id="sea:SeAg_B0429"/>
<dbReference type="HOGENOM" id="CLU_052038_1_1_6"/>
<dbReference type="Proteomes" id="UP000008819">
    <property type="component" value="Chromosome"/>
</dbReference>
<dbReference type="GO" id="GO:0043590">
    <property type="term" value="C:bacterial nucleoid"/>
    <property type="evidence" value="ECO:0007669"/>
    <property type="project" value="TreeGrafter"/>
</dbReference>
<dbReference type="GO" id="GO:0005737">
    <property type="term" value="C:cytoplasm"/>
    <property type="evidence" value="ECO:0007669"/>
    <property type="project" value="UniProtKB-UniRule"/>
</dbReference>
<dbReference type="GO" id="GO:0003690">
    <property type="term" value="F:double-stranded DNA binding"/>
    <property type="evidence" value="ECO:0007669"/>
    <property type="project" value="TreeGrafter"/>
</dbReference>
<dbReference type="GO" id="GO:0006310">
    <property type="term" value="P:DNA recombination"/>
    <property type="evidence" value="ECO:0007669"/>
    <property type="project" value="UniProtKB-UniRule"/>
</dbReference>
<dbReference type="GO" id="GO:0000018">
    <property type="term" value="P:regulation of DNA recombination"/>
    <property type="evidence" value="ECO:0007669"/>
    <property type="project" value="TreeGrafter"/>
</dbReference>
<dbReference type="HAMAP" id="MF_00194">
    <property type="entry name" value="RdgC"/>
    <property type="match status" value="1"/>
</dbReference>
<dbReference type="InterPro" id="IPR007476">
    <property type="entry name" value="RdgC"/>
</dbReference>
<dbReference type="NCBIfam" id="NF001460">
    <property type="entry name" value="PRK00321.1-1"/>
    <property type="match status" value="1"/>
</dbReference>
<dbReference type="NCBIfam" id="NF001462">
    <property type="entry name" value="PRK00321.1-3"/>
    <property type="match status" value="1"/>
</dbReference>
<dbReference type="NCBIfam" id="NF001464">
    <property type="entry name" value="PRK00321.1-5"/>
    <property type="match status" value="1"/>
</dbReference>
<dbReference type="PANTHER" id="PTHR38103">
    <property type="entry name" value="RECOMBINATION-ASSOCIATED PROTEIN RDGC"/>
    <property type="match status" value="1"/>
</dbReference>
<dbReference type="PANTHER" id="PTHR38103:SF1">
    <property type="entry name" value="RECOMBINATION-ASSOCIATED PROTEIN RDGC"/>
    <property type="match status" value="1"/>
</dbReference>
<dbReference type="Pfam" id="PF04381">
    <property type="entry name" value="RdgC"/>
    <property type="match status" value="1"/>
</dbReference>
<name>RDGC_SALA4</name>
<proteinExistence type="inferred from homology"/>
<protein>
    <recommendedName>
        <fullName evidence="1">Recombination-associated protein RdgC</fullName>
    </recommendedName>
</protein>
<organism>
    <name type="scientific">Salmonella agona (strain SL483)</name>
    <dbReference type="NCBI Taxonomy" id="454166"/>
    <lineage>
        <taxon>Bacteria</taxon>
        <taxon>Pseudomonadati</taxon>
        <taxon>Pseudomonadota</taxon>
        <taxon>Gammaproteobacteria</taxon>
        <taxon>Enterobacterales</taxon>
        <taxon>Enterobacteriaceae</taxon>
        <taxon>Salmonella</taxon>
    </lineage>
</organism>
<gene>
    <name evidence="1" type="primary">rdgC</name>
    <name type="ordered locus">SeAg_B0429</name>
</gene>
<accession>B5EWS4</accession>
<keyword id="KW-0963">Cytoplasm</keyword>
<keyword id="KW-0233">DNA recombination</keyword>
<reference key="1">
    <citation type="journal article" date="2011" name="J. Bacteriol.">
        <title>Comparative genomics of 28 Salmonella enterica isolates: evidence for CRISPR-mediated adaptive sublineage evolution.</title>
        <authorList>
            <person name="Fricke W.F."/>
            <person name="Mammel M.K."/>
            <person name="McDermott P.F."/>
            <person name="Tartera C."/>
            <person name="White D.G."/>
            <person name="Leclerc J.E."/>
            <person name="Ravel J."/>
            <person name="Cebula T.A."/>
        </authorList>
    </citation>
    <scope>NUCLEOTIDE SEQUENCE [LARGE SCALE GENOMIC DNA]</scope>
    <source>
        <strain>SL483</strain>
    </source>
</reference>
<sequence length="303" mass="33976">MLWFKNLMVYRLSRDITLRAEEMEKQLASMTFTPCGSQDMAKMGWVPPMGSHSDALTHTANGQIIICARKEEKILPSPVIKQALEAKIQKLEADQGRKLKKTEKDSLKDEVLHSLLPRAFSRFSQTMMWIDTVNGLIMVDCASAKKAEDTLALLRKSLGSLPVVPLALENPIELTLTEWVRSGTVAQGFQLLDEAELKAMLEDGGVIRAKKQDLVSDEIAVHIEAGKVVTKLALDWQQRIQFVMCDDGSIKRLKFCDELRDQNEDIDREDFAQRFDADFILMTGELAALIQSLVEGLGGEAQR</sequence>
<feature type="chain" id="PRO_1000099068" description="Recombination-associated protein RdgC">
    <location>
        <begin position="1"/>
        <end position="303"/>
    </location>
</feature>